<organism>
    <name type="scientific">Drosophila persimilis</name>
    <name type="common">Fruit fly</name>
    <dbReference type="NCBI Taxonomy" id="7234"/>
    <lineage>
        <taxon>Eukaryota</taxon>
        <taxon>Metazoa</taxon>
        <taxon>Ecdysozoa</taxon>
        <taxon>Arthropoda</taxon>
        <taxon>Hexapoda</taxon>
        <taxon>Insecta</taxon>
        <taxon>Pterygota</taxon>
        <taxon>Neoptera</taxon>
        <taxon>Endopterygota</taxon>
        <taxon>Diptera</taxon>
        <taxon>Brachycera</taxon>
        <taxon>Muscomorpha</taxon>
        <taxon>Ephydroidea</taxon>
        <taxon>Drosophilidae</taxon>
        <taxon>Drosophila</taxon>
        <taxon>Sophophora</taxon>
    </lineage>
</organism>
<evidence type="ECO:0000250" key="1">
    <source>
        <dbReference type="UniProtKB" id="Q9VEX5"/>
    </source>
</evidence>
<evidence type="ECO:0000255" key="2"/>
<evidence type="ECO:0000305" key="3"/>
<evidence type="ECO:0000312" key="4">
    <source>
        <dbReference type="EMBL" id="EDW34423.1"/>
    </source>
</evidence>
<gene>
    <name type="primary">asun</name>
    <name type="synonym">Mat89Bb</name>
    <name type="ORF">GL21594</name>
</gene>
<proteinExistence type="inferred from homology"/>
<sequence>MFERNQKTIFVLDHTRYFSIASEEYISMDFLKGKPSAHSSAGGSSQFSKSLWTCACESSIEYCRVVWDLFPGKKHVRFIVSDTAAHIVNTWSASTQNMSHVMNAMVMVGVPSRSMPQSSDYSVIHGLRAAIEALAEPTDEQSQAMASGIPDDLILNEGRVICITSARDNTSMKSLEDIFNTVLIQQNVLSATPPKKGLGINHCHLVILNIVPLGIDSMVTNRNLLEISPLLDVEIHTVGAPDISYKLTHLILDHYDLASTTVTNIPMKEEQNANSSANYDVEILHSRRAHSITCGPDFSLPTSIKQGATYETVTLKWCTPRGCGSADLQPCLGQFLVTPVDVTSRPSSCLINFLLNGRSVLLEMPRKTGSKATSHMLSARGGEIFIHSLCITRSCMDEAPSIADGPGGRVNDYRTSELGQLMKMSRMVPLKSRDPAAPNLPRRLPRYFPLTTTSTVLFHLQRHLSWLPHFLHLLVKEMDKQDEVRCQQHIHELYKSASRGDVLPFTHTNGARLKPHKAKDQYRLLYRELEQLIQLNASTVHHKNLLESLQTLRAAYGDAPSKSEAGTVNLRSFTESPLSPERLEAMSNVSISSSTNSNSLLKASKRRMSNCGTRSLLDIISSAERSQSNKRLDFSGRICTPIGQIAKLYPDFGNKEKDAAAAAAASGVGVAPKE</sequence>
<reference evidence="4" key="1">
    <citation type="journal article" date="2007" name="Nature">
        <title>Evolution of genes and genomes on the Drosophila phylogeny.</title>
        <authorList>
            <consortium name="Drosophila 12 genomes consortium"/>
        </authorList>
    </citation>
    <scope>NUCLEOTIDE SEQUENCE [LARGE SCALE GENOMIC DNA]</scope>
    <source>
        <strain>MSH-3 / Tucson 14011-0111.49</strain>
    </source>
</reference>
<protein>
    <recommendedName>
        <fullName>Protein asunder</fullName>
    </recommendedName>
    <alternativeName>
        <fullName evidence="1">Cell cycle regulator Mat89Bb</fullName>
    </alternativeName>
    <alternativeName>
        <fullName evidence="1">Maternal transcript 89Bb</fullName>
    </alternativeName>
    <alternativeName>
        <fullName>Set apart in position or space protein</fullName>
    </alternativeName>
</protein>
<feature type="chain" id="PRO_0000385344" description="Protein asunder">
    <location>
        <begin position="1"/>
        <end position="674"/>
    </location>
</feature>
<feature type="coiled-coil region" evidence="2">
    <location>
        <begin position="516"/>
        <end position="538"/>
    </location>
</feature>
<feature type="short sequence motif" description="Nuclear localization signal (NLS)" evidence="1">
    <location>
        <begin position="601"/>
        <end position="607"/>
    </location>
</feature>
<name>INT13_DROPE</name>
<comment type="function">
    <text evidence="1">Component of the integrator complex, a multiprotein complex that terminates RNA polymerase II (Pol II) transcription in the promoter-proximal region of genes. The integrator complex provides a quality checkpoint during transcription elongation by driving premature transcription termination of transcripts that are unfavorably configured for transcriptional elongation: the complex terminates transcription by (1) catalyzing dephosphorylation of the C-terminal domain (CTD) of Pol II subunit Polr2A/Rbp1 and Spt5, and (2) degrading the exiting nascent RNA transcript via endonuclease activity. The integrator complex is also involved in the 3'-end processing of the U7 snRNA, and also the spliceosomal snRNAs U1, U2, U4 and U5.</text>
</comment>
<comment type="subunit">
    <text evidence="1">Belongs to the multiprotein complex Integrator, at least composed of IntS1, IntS2, IntS3, IntS4, omd/IntS5, IntS6, defl/IntS7, IntS8, IntS9, IntS10, IntS11, IntS12, asun/IntS13, IntS14 and IntS15. The core complex associates with protein phosphatase 2A subunits mts/PP2A and Pp2A-29B, to form the Integrator-PP2A (INTAC) complex.</text>
</comment>
<comment type="subcellular location">
    <subcellularLocation>
        <location evidence="1">Nucleus</location>
    </subcellularLocation>
    <subcellularLocation>
        <location evidence="1">Cytoplasm</location>
    </subcellularLocation>
    <subcellularLocation>
        <location evidence="1">Cytoplasm</location>
        <location evidence="1">Perinuclear region</location>
    </subcellularLocation>
    <text evidence="1">Colocalizes with dynein-dynactin on the nuclear surface at the meiotic G2/prophase transition in primary spermatocytes. Nuclear location is required for recruitment of dynein motors to nuclear envelope at G2/M.</text>
</comment>
<comment type="PTM">
    <text evidence="1">Phosphorylated.</text>
</comment>
<comment type="similarity">
    <text evidence="3">Belongs to the Integrator subunit 13 family.</text>
</comment>
<keyword id="KW-0131">Cell cycle</keyword>
<keyword id="KW-0132">Cell division</keyword>
<keyword id="KW-0175">Coiled coil</keyword>
<keyword id="KW-0963">Cytoplasm</keyword>
<keyword id="KW-0217">Developmental protein</keyword>
<keyword id="KW-0221">Differentiation</keyword>
<keyword id="KW-0469">Meiosis</keyword>
<keyword id="KW-0498">Mitosis</keyword>
<keyword id="KW-0539">Nucleus</keyword>
<keyword id="KW-0597">Phosphoprotein</keyword>
<keyword id="KW-1185">Reference proteome</keyword>
<keyword id="KW-0744">Spermatogenesis</keyword>
<accession>B4GFN8</accession>
<dbReference type="EMBL" id="CH479182">
    <property type="protein sequence ID" value="EDW34423.1"/>
    <property type="molecule type" value="Genomic_DNA"/>
</dbReference>
<dbReference type="SMR" id="B4GFN8"/>
<dbReference type="STRING" id="7234.B4GFN8"/>
<dbReference type="EnsemblMetazoa" id="FBtr0187209">
    <property type="protein sequence ID" value="FBpp0185701"/>
    <property type="gene ID" value="FBgn0159187"/>
</dbReference>
<dbReference type="EnsemblMetazoa" id="XM_002017287.2">
    <property type="protein sequence ID" value="XP_002017323.1"/>
    <property type="gene ID" value="LOC6591686"/>
</dbReference>
<dbReference type="GeneID" id="6591686"/>
<dbReference type="KEGG" id="dpe:6591686"/>
<dbReference type="CTD" id="41971"/>
<dbReference type="eggNOG" id="KOG3711">
    <property type="taxonomic scope" value="Eukaryota"/>
</dbReference>
<dbReference type="HOGENOM" id="CLU_012654_1_0_1"/>
<dbReference type="OMA" id="NCTAMHR"/>
<dbReference type="OrthoDB" id="5844105at2759"/>
<dbReference type="PhylomeDB" id="B4GFN8"/>
<dbReference type="Proteomes" id="UP000008744">
    <property type="component" value="Unassembled WGS sequence"/>
</dbReference>
<dbReference type="GO" id="GO:0005737">
    <property type="term" value="C:cytoplasm"/>
    <property type="evidence" value="ECO:0000250"/>
    <property type="project" value="UniProtKB"/>
</dbReference>
<dbReference type="GO" id="GO:0160232">
    <property type="term" value="C:INTAC complex"/>
    <property type="evidence" value="ECO:0007669"/>
    <property type="project" value="EnsemblMetazoa"/>
</dbReference>
<dbReference type="GO" id="GO:0032039">
    <property type="term" value="C:integrator complex"/>
    <property type="evidence" value="ECO:0007669"/>
    <property type="project" value="EnsemblMetazoa"/>
</dbReference>
<dbReference type="GO" id="GO:0005634">
    <property type="term" value="C:nucleus"/>
    <property type="evidence" value="ECO:0000250"/>
    <property type="project" value="UniProtKB"/>
</dbReference>
<dbReference type="GO" id="GO:0048471">
    <property type="term" value="C:perinuclear region of cytoplasm"/>
    <property type="evidence" value="ECO:0007669"/>
    <property type="project" value="UniProtKB-SubCell"/>
</dbReference>
<dbReference type="GO" id="GO:0051301">
    <property type="term" value="P:cell division"/>
    <property type="evidence" value="ECO:0007669"/>
    <property type="project" value="UniProtKB-KW"/>
</dbReference>
<dbReference type="GO" id="GO:0051642">
    <property type="term" value="P:centrosome localization"/>
    <property type="evidence" value="ECO:0007669"/>
    <property type="project" value="EnsemblMetazoa"/>
</dbReference>
<dbReference type="GO" id="GO:0046843">
    <property type="term" value="P:dorsal appendage formation"/>
    <property type="evidence" value="ECO:0007669"/>
    <property type="project" value="EnsemblMetazoa"/>
</dbReference>
<dbReference type="GO" id="GO:0030317">
    <property type="term" value="P:flagellated sperm motility"/>
    <property type="evidence" value="ECO:0000250"/>
    <property type="project" value="UniProtKB"/>
</dbReference>
<dbReference type="GO" id="GO:0051321">
    <property type="term" value="P:meiotic cell cycle"/>
    <property type="evidence" value="ECO:0007669"/>
    <property type="project" value="UniProtKB-KW"/>
</dbReference>
<dbReference type="GO" id="GO:0051663">
    <property type="term" value="P:oocyte nucleus localization involved in oocyte dorsal/ventral axis specification"/>
    <property type="evidence" value="ECO:0007669"/>
    <property type="project" value="EnsemblMetazoa"/>
</dbReference>
<dbReference type="GO" id="GO:0060814">
    <property type="term" value="P:posterior mRNA localization involved in anterior/posterior axis specification"/>
    <property type="evidence" value="ECO:0007669"/>
    <property type="project" value="EnsemblMetazoa"/>
</dbReference>
<dbReference type="GO" id="GO:0080154">
    <property type="term" value="P:regulation of fertilization"/>
    <property type="evidence" value="ECO:0000250"/>
    <property type="project" value="UniProtKB"/>
</dbReference>
<dbReference type="GO" id="GO:0007346">
    <property type="term" value="P:regulation of mitotic cell cycle"/>
    <property type="evidence" value="ECO:0000250"/>
    <property type="project" value="UniProtKB"/>
</dbReference>
<dbReference type="GO" id="GO:0160240">
    <property type="term" value="P:RNA polymerase II transcription initiation surveillance"/>
    <property type="evidence" value="ECO:0007669"/>
    <property type="project" value="EnsemblMetazoa"/>
</dbReference>
<dbReference type="GO" id="GO:0034472">
    <property type="term" value="P:snRNA 3'-end processing"/>
    <property type="evidence" value="ECO:0007669"/>
    <property type="project" value="EnsemblMetazoa"/>
</dbReference>
<dbReference type="GO" id="GO:0007283">
    <property type="term" value="P:spermatogenesis"/>
    <property type="evidence" value="ECO:0007669"/>
    <property type="project" value="UniProtKB-KW"/>
</dbReference>
<dbReference type="InterPro" id="IPR019355">
    <property type="entry name" value="Cell_cycle_regulator_Mat89Bb"/>
</dbReference>
<dbReference type="PANTHER" id="PTHR12955:SF1">
    <property type="entry name" value="INTEGRATOR COMPLEX SUBUNIT 13"/>
    <property type="match status" value="1"/>
</dbReference>
<dbReference type="PANTHER" id="PTHR12955">
    <property type="entry name" value="SARCOMA ANTIGEN NY-SAR-95-RELATED"/>
    <property type="match status" value="1"/>
</dbReference>
<dbReference type="Pfam" id="PF10221">
    <property type="entry name" value="Mat89Bb"/>
    <property type="match status" value="1"/>
</dbReference>